<evidence type="ECO:0000255" key="1">
    <source>
        <dbReference type="HAMAP-Rule" id="MF_02002"/>
    </source>
</evidence>
<protein>
    <recommendedName>
        <fullName evidence="1">Isoleucine--tRNA ligase</fullName>
        <ecNumber evidence="1">6.1.1.5</ecNumber>
    </recommendedName>
    <alternativeName>
        <fullName evidence="1">Isoleucyl-tRNA synthetase</fullName>
        <shortName evidence="1">IleRS</shortName>
    </alternativeName>
</protein>
<proteinExistence type="inferred from homology"/>
<accession>B1I721</accession>
<gene>
    <name evidence="1" type="primary">ileS</name>
    <name type="ordered locus">SPH_1767</name>
</gene>
<reference key="1">
    <citation type="journal article" date="2010" name="Genome Biol.">
        <title>Structure and dynamics of the pan-genome of Streptococcus pneumoniae and closely related species.</title>
        <authorList>
            <person name="Donati C."/>
            <person name="Hiller N.L."/>
            <person name="Tettelin H."/>
            <person name="Muzzi A."/>
            <person name="Croucher N.J."/>
            <person name="Angiuoli S.V."/>
            <person name="Oggioni M."/>
            <person name="Dunning Hotopp J.C."/>
            <person name="Hu F.Z."/>
            <person name="Riley D.R."/>
            <person name="Covacci A."/>
            <person name="Mitchell T.J."/>
            <person name="Bentley S.D."/>
            <person name="Kilian M."/>
            <person name="Ehrlich G.D."/>
            <person name="Rappuoli R."/>
            <person name="Moxon E.R."/>
            <person name="Masignani V."/>
        </authorList>
    </citation>
    <scope>NUCLEOTIDE SEQUENCE [LARGE SCALE GENOMIC DNA]</scope>
    <source>
        <strain>Hungary19A-6</strain>
    </source>
</reference>
<organism>
    <name type="scientific">Streptococcus pneumoniae (strain Hungary19A-6)</name>
    <dbReference type="NCBI Taxonomy" id="487214"/>
    <lineage>
        <taxon>Bacteria</taxon>
        <taxon>Bacillati</taxon>
        <taxon>Bacillota</taxon>
        <taxon>Bacilli</taxon>
        <taxon>Lactobacillales</taxon>
        <taxon>Streptococcaceae</taxon>
        <taxon>Streptococcus</taxon>
    </lineage>
</organism>
<dbReference type="EC" id="6.1.1.5" evidence="1"/>
<dbReference type="EMBL" id="CP000936">
    <property type="protein sequence ID" value="ACA35572.1"/>
    <property type="molecule type" value="Genomic_DNA"/>
</dbReference>
<dbReference type="RefSeq" id="WP_000768073.1">
    <property type="nucleotide sequence ID" value="NC_010380.1"/>
</dbReference>
<dbReference type="SMR" id="B1I721"/>
<dbReference type="KEGG" id="spv:SPH_1767"/>
<dbReference type="HOGENOM" id="CLU_001493_7_1_9"/>
<dbReference type="Proteomes" id="UP000002163">
    <property type="component" value="Chromosome"/>
</dbReference>
<dbReference type="GO" id="GO:0005829">
    <property type="term" value="C:cytosol"/>
    <property type="evidence" value="ECO:0007669"/>
    <property type="project" value="TreeGrafter"/>
</dbReference>
<dbReference type="GO" id="GO:0002161">
    <property type="term" value="F:aminoacyl-tRNA deacylase activity"/>
    <property type="evidence" value="ECO:0007669"/>
    <property type="project" value="InterPro"/>
</dbReference>
<dbReference type="GO" id="GO:0005524">
    <property type="term" value="F:ATP binding"/>
    <property type="evidence" value="ECO:0007669"/>
    <property type="project" value="UniProtKB-UniRule"/>
</dbReference>
<dbReference type="GO" id="GO:0004822">
    <property type="term" value="F:isoleucine-tRNA ligase activity"/>
    <property type="evidence" value="ECO:0007669"/>
    <property type="project" value="UniProtKB-UniRule"/>
</dbReference>
<dbReference type="GO" id="GO:0000049">
    <property type="term" value="F:tRNA binding"/>
    <property type="evidence" value="ECO:0007669"/>
    <property type="project" value="InterPro"/>
</dbReference>
<dbReference type="GO" id="GO:0008270">
    <property type="term" value="F:zinc ion binding"/>
    <property type="evidence" value="ECO:0007669"/>
    <property type="project" value="UniProtKB-UniRule"/>
</dbReference>
<dbReference type="GO" id="GO:0006428">
    <property type="term" value="P:isoleucyl-tRNA aminoacylation"/>
    <property type="evidence" value="ECO:0007669"/>
    <property type="project" value="UniProtKB-UniRule"/>
</dbReference>
<dbReference type="CDD" id="cd07960">
    <property type="entry name" value="Anticodon_Ia_Ile_BEm"/>
    <property type="match status" value="1"/>
</dbReference>
<dbReference type="CDD" id="cd00818">
    <property type="entry name" value="IleRS_core"/>
    <property type="match status" value="1"/>
</dbReference>
<dbReference type="FunFam" id="1.10.10.830:FF:000001">
    <property type="entry name" value="Isoleucine--tRNA ligase"/>
    <property type="match status" value="1"/>
</dbReference>
<dbReference type="FunFam" id="1.10.730.20:FF:000001">
    <property type="entry name" value="Isoleucine--tRNA ligase"/>
    <property type="match status" value="1"/>
</dbReference>
<dbReference type="FunFam" id="3.40.50.620:FF:000092">
    <property type="entry name" value="Isoleucine--tRNA ligase"/>
    <property type="match status" value="1"/>
</dbReference>
<dbReference type="FunFam" id="3.90.740.10:FF:000006">
    <property type="entry name" value="Isoleucine--tRNA ligase"/>
    <property type="match status" value="1"/>
</dbReference>
<dbReference type="Gene3D" id="1.10.730.20">
    <property type="match status" value="1"/>
</dbReference>
<dbReference type="Gene3D" id="3.40.50.620">
    <property type="entry name" value="HUPs"/>
    <property type="match status" value="2"/>
</dbReference>
<dbReference type="Gene3D" id="1.10.10.830">
    <property type="entry name" value="Ile-tRNA synthetase CP2 domain-like"/>
    <property type="match status" value="1"/>
</dbReference>
<dbReference type="Gene3D" id="3.90.740.10">
    <property type="entry name" value="Valyl/Leucyl/Isoleucyl-tRNA synthetase, editing domain"/>
    <property type="match status" value="1"/>
</dbReference>
<dbReference type="HAMAP" id="MF_02002">
    <property type="entry name" value="Ile_tRNA_synth_type1"/>
    <property type="match status" value="1"/>
</dbReference>
<dbReference type="InterPro" id="IPR001412">
    <property type="entry name" value="aa-tRNA-synth_I_CS"/>
</dbReference>
<dbReference type="InterPro" id="IPR002300">
    <property type="entry name" value="aa-tRNA-synth_Ia"/>
</dbReference>
<dbReference type="InterPro" id="IPR033708">
    <property type="entry name" value="Anticodon_Ile_BEm"/>
</dbReference>
<dbReference type="InterPro" id="IPR002301">
    <property type="entry name" value="Ile-tRNA-ligase"/>
</dbReference>
<dbReference type="InterPro" id="IPR023585">
    <property type="entry name" value="Ile-tRNA-ligase_type1"/>
</dbReference>
<dbReference type="InterPro" id="IPR050081">
    <property type="entry name" value="Ile-tRNA_ligase"/>
</dbReference>
<dbReference type="InterPro" id="IPR013155">
    <property type="entry name" value="M/V/L/I-tRNA-synth_anticd-bd"/>
</dbReference>
<dbReference type="InterPro" id="IPR014729">
    <property type="entry name" value="Rossmann-like_a/b/a_fold"/>
</dbReference>
<dbReference type="InterPro" id="IPR009080">
    <property type="entry name" value="tRNAsynth_Ia_anticodon-bd"/>
</dbReference>
<dbReference type="InterPro" id="IPR009008">
    <property type="entry name" value="Val/Leu/Ile-tRNA-synth_edit"/>
</dbReference>
<dbReference type="InterPro" id="IPR010663">
    <property type="entry name" value="Znf_FPG/IleRS"/>
</dbReference>
<dbReference type="NCBIfam" id="TIGR00392">
    <property type="entry name" value="ileS"/>
    <property type="match status" value="1"/>
</dbReference>
<dbReference type="PANTHER" id="PTHR42765:SF1">
    <property type="entry name" value="ISOLEUCINE--TRNA LIGASE, MITOCHONDRIAL"/>
    <property type="match status" value="1"/>
</dbReference>
<dbReference type="PANTHER" id="PTHR42765">
    <property type="entry name" value="SOLEUCYL-TRNA SYNTHETASE"/>
    <property type="match status" value="1"/>
</dbReference>
<dbReference type="Pfam" id="PF08264">
    <property type="entry name" value="Anticodon_1"/>
    <property type="match status" value="1"/>
</dbReference>
<dbReference type="Pfam" id="PF00133">
    <property type="entry name" value="tRNA-synt_1"/>
    <property type="match status" value="1"/>
</dbReference>
<dbReference type="Pfam" id="PF06827">
    <property type="entry name" value="zf-FPG_IleRS"/>
    <property type="match status" value="1"/>
</dbReference>
<dbReference type="PRINTS" id="PR00984">
    <property type="entry name" value="TRNASYNTHILE"/>
</dbReference>
<dbReference type="SUPFAM" id="SSF47323">
    <property type="entry name" value="Anticodon-binding domain of a subclass of class I aminoacyl-tRNA synthetases"/>
    <property type="match status" value="1"/>
</dbReference>
<dbReference type="SUPFAM" id="SSF52374">
    <property type="entry name" value="Nucleotidylyl transferase"/>
    <property type="match status" value="1"/>
</dbReference>
<dbReference type="SUPFAM" id="SSF50677">
    <property type="entry name" value="ValRS/IleRS/LeuRS editing domain"/>
    <property type="match status" value="1"/>
</dbReference>
<dbReference type="PROSITE" id="PS00178">
    <property type="entry name" value="AA_TRNA_LIGASE_I"/>
    <property type="match status" value="1"/>
</dbReference>
<name>SYI_STRPI</name>
<feature type="chain" id="PRO_1000189203" description="Isoleucine--tRNA ligase">
    <location>
        <begin position="1"/>
        <end position="930"/>
    </location>
</feature>
<feature type="short sequence motif" description="'HIGH' region">
    <location>
        <begin position="57"/>
        <end position="67"/>
    </location>
</feature>
<feature type="short sequence motif" description="'KMSKS' region">
    <location>
        <begin position="595"/>
        <end position="599"/>
    </location>
</feature>
<feature type="binding site" evidence="1">
    <location>
        <position position="554"/>
    </location>
    <ligand>
        <name>L-isoleucyl-5'-AMP</name>
        <dbReference type="ChEBI" id="CHEBI:178002"/>
    </ligand>
</feature>
<feature type="binding site" evidence="1">
    <location>
        <position position="598"/>
    </location>
    <ligand>
        <name>ATP</name>
        <dbReference type="ChEBI" id="CHEBI:30616"/>
    </ligand>
</feature>
<feature type="binding site" evidence="1">
    <location>
        <position position="888"/>
    </location>
    <ligand>
        <name>Zn(2+)</name>
        <dbReference type="ChEBI" id="CHEBI:29105"/>
    </ligand>
</feature>
<feature type="binding site" evidence="1">
    <location>
        <position position="891"/>
    </location>
    <ligand>
        <name>Zn(2+)</name>
        <dbReference type="ChEBI" id="CHEBI:29105"/>
    </ligand>
</feature>
<feature type="binding site" evidence="1">
    <location>
        <position position="908"/>
    </location>
    <ligand>
        <name>Zn(2+)</name>
        <dbReference type="ChEBI" id="CHEBI:29105"/>
    </ligand>
</feature>
<feature type="binding site" evidence="1">
    <location>
        <position position="911"/>
    </location>
    <ligand>
        <name>Zn(2+)</name>
        <dbReference type="ChEBI" id="CHEBI:29105"/>
    </ligand>
</feature>
<comment type="function">
    <text evidence="1">Catalyzes the attachment of isoleucine to tRNA(Ile). As IleRS can inadvertently accommodate and process structurally similar amino acids such as valine, to avoid such errors it has two additional distinct tRNA(Ile)-dependent editing activities. One activity is designated as 'pretransfer' editing and involves the hydrolysis of activated Val-AMP. The other activity is designated 'posttransfer' editing and involves deacylation of mischarged Val-tRNA(Ile).</text>
</comment>
<comment type="catalytic activity">
    <reaction evidence="1">
        <text>tRNA(Ile) + L-isoleucine + ATP = L-isoleucyl-tRNA(Ile) + AMP + diphosphate</text>
        <dbReference type="Rhea" id="RHEA:11060"/>
        <dbReference type="Rhea" id="RHEA-COMP:9666"/>
        <dbReference type="Rhea" id="RHEA-COMP:9695"/>
        <dbReference type="ChEBI" id="CHEBI:30616"/>
        <dbReference type="ChEBI" id="CHEBI:33019"/>
        <dbReference type="ChEBI" id="CHEBI:58045"/>
        <dbReference type="ChEBI" id="CHEBI:78442"/>
        <dbReference type="ChEBI" id="CHEBI:78528"/>
        <dbReference type="ChEBI" id="CHEBI:456215"/>
        <dbReference type="EC" id="6.1.1.5"/>
    </reaction>
</comment>
<comment type="cofactor">
    <cofactor evidence="1">
        <name>Zn(2+)</name>
        <dbReference type="ChEBI" id="CHEBI:29105"/>
    </cofactor>
    <text evidence="1">Binds 1 zinc ion per subunit.</text>
</comment>
<comment type="subunit">
    <text evidence="1">Monomer.</text>
</comment>
<comment type="subcellular location">
    <subcellularLocation>
        <location evidence="1">Cytoplasm</location>
    </subcellularLocation>
</comment>
<comment type="domain">
    <text evidence="1">IleRS has two distinct active sites: one for aminoacylation and one for editing. The misactivated valine is translocated from the active site to the editing site, which sterically excludes the correctly activated isoleucine. The single editing site contains two valyl binding pockets, one specific for each substrate (Val-AMP or Val-tRNA(Ile)).</text>
</comment>
<comment type="similarity">
    <text evidence="1">Belongs to the class-I aminoacyl-tRNA synthetase family. IleS type 1 subfamily.</text>
</comment>
<keyword id="KW-0030">Aminoacyl-tRNA synthetase</keyword>
<keyword id="KW-0067">ATP-binding</keyword>
<keyword id="KW-0963">Cytoplasm</keyword>
<keyword id="KW-0436">Ligase</keyword>
<keyword id="KW-0479">Metal-binding</keyword>
<keyword id="KW-0547">Nucleotide-binding</keyword>
<keyword id="KW-0648">Protein biosynthesis</keyword>
<keyword id="KW-0862">Zinc</keyword>
<sequence length="930" mass="105337">MKLKDTLNLGKTEFPMRAGLPTKEPVWQKEWEDAKLYQRRQELNQGKPHFTLHDGPPYANGNIHVGHAMNKISKDIIVRSKSMSGFYAPFIPGWDTHGLPIEQVLSKQGVKRKEMDLVEYLKLCREYALSQVDKQREDFKRLGVSGDWENPYVTLTPDYEAAQIRVFGEMANKGYIYRGAKPVYWSWSSESALAEAEIEYHDLVSTSLYYANKVKDGKGVLDTDTYIVVWTTTPFTITASRGLTVGADIDYVLVQPAGEARKFVVAAELLTSLSEKFGWADVQVLETYRGQELNHIVTEHPWDTAVEELVILGDHVTTDSGTGIVHTAPGFGEDDYNVGIANNLEVAVTVDERGIMMKNAGPEFEGQFYEKVVPTVIEKLGNLLLAQEEISHSYPFDWRTKKPIIWRAVPQWFASVSKFRQEILDEIEKVKFHSEWGKVRLYNMIRDRGDWVISRQRAWGVPLPIFYAEDGTAIMVAETIEHVAQLFEEHGSSIWWERDAKDLLPEEFTHPGSPNGEFKKETDIMDVWFDSGSSWNGVVVNRPELTYPADLYLEGSDQYRGWFNSSLITSVANHGVAPYKQILSQGFALDGKGEKMSKSLGNTIAPSDVEKQFGAEILRLWVTSVDSSNDVRISMDILSQVSETYRKIRNTLRFLIANTSDFNPAQDTVAYDELRSVDKYMTIRFNQLVKTIRDAYADFEFLTIYKALVNFINVDLSAFYLDFAKDVVYIEGAKSLERRQMQTVFYDILVKITKLLTPILPHTAEEIWSYLEFEAEDFVQLSELPEAQTSANQEEILDTWAAFMDFRGQAQKALEEARNAKVIGKSLEAHLTVYPNEVVKTLLEAVNSNVAQLLIVSDLTIAEGPAPEAALSFEDVAFTVERAAGEVCDRCRRIDPTTAERSYQAVICDHCASIVEENFAEAVAEGFEEK</sequence>